<dbReference type="EMBL" id="BC124767">
    <property type="protein sequence ID" value="AAI24768.1"/>
    <property type="molecule type" value="mRNA"/>
</dbReference>
<dbReference type="EMBL" id="BX890565">
    <property type="status" value="NOT_ANNOTATED_CDS"/>
    <property type="molecule type" value="Genomic_DNA"/>
</dbReference>
<dbReference type="RefSeq" id="NP_001159710.1">
    <property type="nucleotide sequence ID" value="NM_001166238.2"/>
</dbReference>
<dbReference type="RefSeq" id="XP_017209589.1">
    <property type="nucleotide sequence ID" value="XM_017354100.1"/>
</dbReference>
<dbReference type="SMR" id="F6P3G4"/>
<dbReference type="FunCoup" id="F6P3G4">
    <property type="interactions" value="3199"/>
</dbReference>
<dbReference type="STRING" id="7955.ENSDARP00000129353"/>
<dbReference type="PaxDb" id="7955-ENSDARP00000078883"/>
<dbReference type="Ensembl" id="ENSDART00000084448">
    <property type="protein sequence ID" value="ENSDARP00000078883"/>
    <property type="gene ID" value="ENSDARG00000060150"/>
</dbReference>
<dbReference type="Ensembl" id="ENSDART00000154696">
    <property type="protein sequence ID" value="ENSDARP00000129353"/>
    <property type="gene ID" value="ENSDARG00000060150"/>
</dbReference>
<dbReference type="GeneID" id="503934"/>
<dbReference type="KEGG" id="dre:503934"/>
<dbReference type="AGR" id="ZFIN:ZDB-GENE-030131-2711"/>
<dbReference type="CTD" id="503934"/>
<dbReference type="ZFIN" id="ZDB-GENE-030131-2711">
    <property type="gene designation" value="psmd11a"/>
</dbReference>
<dbReference type="eggNOG" id="KOG1463">
    <property type="taxonomic scope" value="Eukaryota"/>
</dbReference>
<dbReference type="InParanoid" id="F6P3G4"/>
<dbReference type="OMA" id="ESKIYHA"/>
<dbReference type="OrthoDB" id="1418352at2759"/>
<dbReference type="PhylomeDB" id="F6P3G4"/>
<dbReference type="TreeFam" id="TF106230"/>
<dbReference type="PRO" id="PR:F6P3G4"/>
<dbReference type="Proteomes" id="UP000000437">
    <property type="component" value="Chromosome 3"/>
</dbReference>
<dbReference type="Bgee" id="ENSDARG00000060150">
    <property type="expression patterns" value="Expressed in blastula and 29 other cell types or tissues"/>
</dbReference>
<dbReference type="ExpressionAtlas" id="F6P3G4">
    <property type="expression patterns" value="baseline and differential"/>
</dbReference>
<dbReference type="GO" id="GO:0005829">
    <property type="term" value="C:cytosol"/>
    <property type="evidence" value="ECO:0007669"/>
    <property type="project" value="UniProtKB-SubCell"/>
</dbReference>
<dbReference type="GO" id="GO:0005634">
    <property type="term" value="C:nucleus"/>
    <property type="evidence" value="ECO:0007669"/>
    <property type="project" value="UniProtKB-SubCell"/>
</dbReference>
<dbReference type="GO" id="GO:0022624">
    <property type="term" value="C:proteasome accessory complex"/>
    <property type="evidence" value="ECO:0000250"/>
    <property type="project" value="UniProtKB"/>
</dbReference>
<dbReference type="GO" id="GO:0008541">
    <property type="term" value="C:proteasome regulatory particle, lid subcomplex"/>
    <property type="evidence" value="ECO:0000318"/>
    <property type="project" value="GO_Central"/>
</dbReference>
<dbReference type="GO" id="GO:0005198">
    <property type="term" value="F:structural molecule activity"/>
    <property type="evidence" value="ECO:0000318"/>
    <property type="project" value="GO_Central"/>
</dbReference>
<dbReference type="GO" id="GO:0043248">
    <property type="term" value="P:proteasome assembly"/>
    <property type="evidence" value="ECO:0000250"/>
    <property type="project" value="UniProtKB"/>
</dbReference>
<dbReference type="GO" id="GO:0048863">
    <property type="term" value="P:stem cell differentiation"/>
    <property type="evidence" value="ECO:0000250"/>
    <property type="project" value="UniProtKB"/>
</dbReference>
<dbReference type="GO" id="GO:0006511">
    <property type="term" value="P:ubiquitin-dependent protein catabolic process"/>
    <property type="evidence" value="ECO:0000250"/>
    <property type="project" value="UniProtKB"/>
</dbReference>
<dbReference type="FunFam" id="1.25.40.570:FF:000003">
    <property type="entry name" value="26S proteasome non-ATPase regulatory subunit 11"/>
    <property type="match status" value="1"/>
</dbReference>
<dbReference type="Gene3D" id="1.25.40.570">
    <property type="match status" value="1"/>
</dbReference>
<dbReference type="InterPro" id="IPR050871">
    <property type="entry name" value="26S_Proteasome/COP9_Components"/>
</dbReference>
<dbReference type="InterPro" id="IPR000717">
    <property type="entry name" value="PCI_dom"/>
</dbReference>
<dbReference type="InterPro" id="IPR040780">
    <property type="entry name" value="Rpn6_C_helix"/>
</dbReference>
<dbReference type="InterPro" id="IPR040773">
    <property type="entry name" value="Rpn6_N"/>
</dbReference>
<dbReference type="InterPro" id="IPR011990">
    <property type="entry name" value="TPR-like_helical_dom_sf"/>
</dbReference>
<dbReference type="InterPro" id="IPR036390">
    <property type="entry name" value="WH_DNA-bd_sf"/>
</dbReference>
<dbReference type="PANTHER" id="PTHR10678">
    <property type="entry name" value="26S PROTEASOME NON-ATPASE REGULATORY SUBUNIT 11/COP9 SIGNALOSOME COMPLEX SUBUNIT 2"/>
    <property type="match status" value="1"/>
</dbReference>
<dbReference type="Pfam" id="PF01399">
    <property type="entry name" value="PCI"/>
    <property type="match status" value="1"/>
</dbReference>
<dbReference type="Pfam" id="PF18503">
    <property type="entry name" value="RPN6_C_helix"/>
    <property type="match status" value="1"/>
</dbReference>
<dbReference type="Pfam" id="PF18055">
    <property type="entry name" value="RPN6_N"/>
    <property type="match status" value="1"/>
</dbReference>
<dbReference type="SMART" id="SM00753">
    <property type="entry name" value="PAM"/>
    <property type="match status" value="1"/>
</dbReference>
<dbReference type="SMART" id="SM00088">
    <property type="entry name" value="PINT"/>
    <property type="match status" value="1"/>
</dbReference>
<dbReference type="SUPFAM" id="SSF48452">
    <property type="entry name" value="TPR-like"/>
    <property type="match status" value="1"/>
</dbReference>
<dbReference type="SUPFAM" id="SSF46785">
    <property type="entry name" value="Winged helix' DNA-binding domain"/>
    <property type="match status" value="1"/>
</dbReference>
<dbReference type="PROSITE" id="PS50250">
    <property type="entry name" value="PCI"/>
    <property type="match status" value="1"/>
</dbReference>
<sequence length="421" mass="47374">MAATAVEFQRAQSLLSTDRNASIDILHAIVKRDVQDDDEEAVRVKEQSILELGGLLAKTGQAAELGGLLKYVRPFLNSISKAKAARLVRSLLDMFLDMEAATGQEVELCLECIEWAKSEKRTFLRQALEARLVSLYFDTKRYQEALQLGSQLLQELKKMDDKALLVELQLLESKTYHALSNLPKARAALTSARTTANAIYCPPKLQAALDMQSGIIHAAEEKDWKTAYSYFYEAFEGYDSIDSPRAITALKYMLLCKIMLNSPEDVQSLISGKLALRYAGRQTEALKCVAQASKNRSLADFEKALTEYKAELRDDPIISTHLTKLYDNLLEQNLIRVIEPFSRVQIEHISELIKLSKGDVERKLSQMILDQKFHGILDQGEGVLIVFDEPPVDKTYEASLETIQNMSKVVDSLYNKAKKLT</sequence>
<accession>F6P3G4</accession>
<accession>A0AUR6</accession>
<evidence type="ECO:0000250" key="1"/>
<evidence type="ECO:0000255" key="2">
    <source>
        <dbReference type="PROSITE-ProRule" id="PRU01185"/>
    </source>
</evidence>
<evidence type="ECO:0000305" key="3"/>
<keyword id="KW-0963">Cytoplasm</keyword>
<keyword id="KW-0539">Nucleus</keyword>
<keyword id="KW-0647">Proteasome</keyword>
<keyword id="KW-1185">Reference proteome</keyword>
<comment type="function">
    <text evidence="1">Component of the lid subcomplex of the 26S proteasome, a multiprotein complex involved in the ATP-dependent degradation of ubiquitinated proteins. In the complex, psmd11a is required for proteasome assembly (By similarity).</text>
</comment>
<comment type="subunit">
    <text evidence="1">Component of the lid subcomplex of the 19S proteasome regulatory particle complex (also named PA700 complex). The 26S proteasome consists of a 20S proteasome core and two 19S regulatory subunits (By similarity).</text>
</comment>
<comment type="subcellular location">
    <subcellularLocation>
        <location evidence="1">Nucleus</location>
    </subcellularLocation>
    <subcellularLocation>
        <location evidence="1">Cytoplasm</location>
        <location evidence="1">Cytosol</location>
    </subcellularLocation>
</comment>
<comment type="similarity">
    <text evidence="3">Belongs to the proteasome subunit S9 family.</text>
</comment>
<proteinExistence type="evidence at transcript level"/>
<gene>
    <name type="primary">psmd11a</name>
</gene>
<reference key="1">
    <citation type="journal article" date="2013" name="Nature">
        <title>The zebrafish reference genome sequence and its relationship to the human genome.</title>
        <authorList>
            <person name="Howe K."/>
            <person name="Clark M.D."/>
            <person name="Torroja C.F."/>
            <person name="Torrance J."/>
            <person name="Berthelot C."/>
            <person name="Muffato M."/>
            <person name="Collins J.E."/>
            <person name="Humphray S."/>
            <person name="McLaren K."/>
            <person name="Matthews L."/>
            <person name="McLaren S."/>
            <person name="Sealy I."/>
            <person name="Caccamo M."/>
            <person name="Churcher C."/>
            <person name="Scott C."/>
            <person name="Barrett J.C."/>
            <person name="Koch R."/>
            <person name="Rauch G.J."/>
            <person name="White S."/>
            <person name="Chow W."/>
            <person name="Kilian B."/>
            <person name="Quintais L.T."/>
            <person name="Guerra-Assuncao J.A."/>
            <person name="Zhou Y."/>
            <person name="Gu Y."/>
            <person name="Yen J."/>
            <person name="Vogel J.H."/>
            <person name="Eyre T."/>
            <person name="Redmond S."/>
            <person name="Banerjee R."/>
            <person name="Chi J."/>
            <person name="Fu B."/>
            <person name="Langley E."/>
            <person name="Maguire S.F."/>
            <person name="Laird G.K."/>
            <person name="Lloyd D."/>
            <person name="Kenyon E."/>
            <person name="Donaldson S."/>
            <person name="Sehra H."/>
            <person name="Almeida-King J."/>
            <person name="Loveland J."/>
            <person name="Trevanion S."/>
            <person name="Jones M."/>
            <person name="Quail M."/>
            <person name="Willey D."/>
            <person name="Hunt A."/>
            <person name="Burton J."/>
            <person name="Sims S."/>
            <person name="McLay K."/>
            <person name="Plumb B."/>
            <person name="Davis J."/>
            <person name="Clee C."/>
            <person name="Oliver K."/>
            <person name="Clark R."/>
            <person name="Riddle C."/>
            <person name="Elliot D."/>
            <person name="Threadgold G."/>
            <person name="Harden G."/>
            <person name="Ware D."/>
            <person name="Begum S."/>
            <person name="Mortimore B."/>
            <person name="Kerry G."/>
            <person name="Heath P."/>
            <person name="Phillimore B."/>
            <person name="Tracey A."/>
            <person name="Corby N."/>
            <person name="Dunn M."/>
            <person name="Johnson C."/>
            <person name="Wood J."/>
            <person name="Clark S."/>
            <person name="Pelan S."/>
            <person name="Griffiths G."/>
            <person name="Smith M."/>
            <person name="Glithero R."/>
            <person name="Howden P."/>
            <person name="Barker N."/>
            <person name="Lloyd C."/>
            <person name="Stevens C."/>
            <person name="Harley J."/>
            <person name="Holt K."/>
            <person name="Panagiotidis G."/>
            <person name="Lovell J."/>
            <person name="Beasley H."/>
            <person name="Henderson C."/>
            <person name="Gordon D."/>
            <person name="Auger K."/>
            <person name="Wright D."/>
            <person name="Collins J."/>
            <person name="Raisen C."/>
            <person name="Dyer L."/>
            <person name="Leung K."/>
            <person name="Robertson L."/>
            <person name="Ambridge K."/>
            <person name="Leongamornlert D."/>
            <person name="McGuire S."/>
            <person name="Gilderthorp R."/>
            <person name="Griffiths C."/>
            <person name="Manthravadi D."/>
            <person name="Nichol S."/>
            <person name="Barker G."/>
            <person name="Whitehead S."/>
            <person name="Kay M."/>
            <person name="Brown J."/>
            <person name="Murnane C."/>
            <person name="Gray E."/>
            <person name="Humphries M."/>
            <person name="Sycamore N."/>
            <person name="Barker D."/>
            <person name="Saunders D."/>
            <person name="Wallis J."/>
            <person name="Babbage A."/>
            <person name="Hammond S."/>
            <person name="Mashreghi-Mohammadi M."/>
            <person name="Barr L."/>
            <person name="Martin S."/>
            <person name="Wray P."/>
            <person name="Ellington A."/>
            <person name="Matthews N."/>
            <person name="Ellwood M."/>
            <person name="Woodmansey R."/>
            <person name="Clark G."/>
            <person name="Cooper J."/>
            <person name="Tromans A."/>
            <person name="Grafham D."/>
            <person name="Skuce C."/>
            <person name="Pandian R."/>
            <person name="Andrews R."/>
            <person name="Harrison E."/>
            <person name="Kimberley A."/>
            <person name="Garnett J."/>
            <person name="Fosker N."/>
            <person name="Hall R."/>
            <person name="Garner P."/>
            <person name="Kelly D."/>
            <person name="Bird C."/>
            <person name="Palmer S."/>
            <person name="Gehring I."/>
            <person name="Berger A."/>
            <person name="Dooley C.M."/>
            <person name="Ersan-Urun Z."/>
            <person name="Eser C."/>
            <person name="Geiger H."/>
            <person name="Geisler M."/>
            <person name="Karotki L."/>
            <person name="Kirn A."/>
            <person name="Konantz J."/>
            <person name="Konantz M."/>
            <person name="Oberlander M."/>
            <person name="Rudolph-Geiger S."/>
            <person name="Teucke M."/>
            <person name="Lanz C."/>
            <person name="Raddatz G."/>
            <person name="Osoegawa K."/>
            <person name="Zhu B."/>
            <person name="Rapp A."/>
            <person name="Widaa S."/>
            <person name="Langford C."/>
            <person name="Yang F."/>
            <person name="Schuster S.C."/>
            <person name="Carter N.P."/>
            <person name="Harrow J."/>
            <person name="Ning Z."/>
            <person name="Herrero J."/>
            <person name="Searle S.M."/>
            <person name="Enright A."/>
            <person name="Geisler R."/>
            <person name="Plasterk R.H."/>
            <person name="Lee C."/>
            <person name="Westerfield M."/>
            <person name="de Jong P.J."/>
            <person name="Zon L.I."/>
            <person name="Postlethwait J.H."/>
            <person name="Nusslein-Volhard C."/>
            <person name="Hubbard T.J."/>
            <person name="Roest Crollius H."/>
            <person name="Rogers J."/>
            <person name="Stemple D.L."/>
        </authorList>
    </citation>
    <scope>NUCLEOTIDE SEQUENCE [LARGE SCALE GENOMIC DNA]</scope>
    <source>
        <strain>Tuebingen</strain>
    </source>
</reference>
<reference key="2">
    <citation type="submission" date="2006-10" db="EMBL/GenBank/DDBJ databases">
        <authorList>
            <consortium name="NIH - Zebrafish Gene Collection (ZGC) project"/>
        </authorList>
    </citation>
    <scope>NUCLEOTIDE SEQUENCE [LARGE SCALE MRNA] OF 10-421</scope>
</reference>
<feature type="chain" id="PRO_0000419979" description="26S proteasome non-ATPase regulatory subunit 11A">
    <location>
        <begin position="1"/>
        <end position="421"/>
    </location>
</feature>
<feature type="domain" description="PCI" evidence="2">
    <location>
        <begin position="227"/>
        <end position="391"/>
    </location>
</feature>
<protein>
    <recommendedName>
        <fullName>26S proteasome non-ATPase regulatory subunit 11A</fullName>
    </recommendedName>
    <alternativeName>
        <fullName>26S proteasome regulatory subunit RPN6-A</fullName>
    </alternativeName>
</protein>
<organism>
    <name type="scientific">Danio rerio</name>
    <name type="common">Zebrafish</name>
    <name type="synonym">Brachydanio rerio</name>
    <dbReference type="NCBI Taxonomy" id="7955"/>
    <lineage>
        <taxon>Eukaryota</taxon>
        <taxon>Metazoa</taxon>
        <taxon>Chordata</taxon>
        <taxon>Craniata</taxon>
        <taxon>Vertebrata</taxon>
        <taxon>Euteleostomi</taxon>
        <taxon>Actinopterygii</taxon>
        <taxon>Neopterygii</taxon>
        <taxon>Teleostei</taxon>
        <taxon>Ostariophysi</taxon>
        <taxon>Cypriniformes</taxon>
        <taxon>Danionidae</taxon>
        <taxon>Danioninae</taxon>
        <taxon>Danio</taxon>
    </lineage>
</organism>
<name>PS11A_DANRE</name>